<comment type="catalytic activity">
    <reaction evidence="1">
        <text>a 6-phospho-beta-D-galactoside + H2O = D-galactose 6-phosphate + an alcohol</text>
        <dbReference type="Rhea" id="RHEA:24568"/>
        <dbReference type="ChEBI" id="CHEBI:15377"/>
        <dbReference type="ChEBI" id="CHEBI:30879"/>
        <dbReference type="ChEBI" id="CHEBI:58534"/>
        <dbReference type="ChEBI" id="CHEBI:91004"/>
        <dbReference type="EC" id="3.2.1.85"/>
    </reaction>
</comment>
<comment type="pathway">
    <text evidence="1">Carbohydrate metabolism; lactose degradation; D-galactose 6-phosphate and beta-D-glucose from lactose 6-phosphate: step 1/1.</text>
</comment>
<comment type="similarity">
    <text evidence="1">Belongs to the glycosyl hydrolase 1 family.</text>
</comment>
<keyword id="KW-0326">Glycosidase</keyword>
<keyword id="KW-0378">Hydrolase</keyword>
<gene>
    <name evidence="1" type="primary">lacG</name>
    <name type="ordered locus">SpyM51607</name>
</gene>
<accession>A2RGE8</accession>
<name>LACG_STRPG</name>
<reference key="1">
    <citation type="journal article" date="2007" name="J. Bacteriol.">
        <title>Complete genome of acute rheumatic fever-associated serotype M5 Streptococcus pyogenes strain Manfredo.</title>
        <authorList>
            <person name="Holden M.T.G."/>
            <person name="Scott A."/>
            <person name="Cherevach I."/>
            <person name="Chillingworth T."/>
            <person name="Churcher C."/>
            <person name="Cronin A."/>
            <person name="Dowd L."/>
            <person name="Feltwell T."/>
            <person name="Hamlin N."/>
            <person name="Holroyd S."/>
            <person name="Jagels K."/>
            <person name="Moule S."/>
            <person name="Mungall K."/>
            <person name="Quail M.A."/>
            <person name="Price C."/>
            <person name="Rabbinowitsch E."/>
            <person name="Sharp S."/>
            <person name="Skelton J."/>
            <person name="Whitehead S."/>
            <person name="Barrell B.G."/>
            <person name="Kehoe M."/>
            <person name="Parkhill J."/>
        </authorList>
    </citation>
    <scope>NUCLEOTIDE SEQUENCE [LARGE SCALE GENOMIC DNA]</scope>
    <source>
        <strain>Manfredo</strain>
    </source>
</reference>
<protein>
    <recommendedName>
        <fullName evidence="1">6-phospho-beta-galactosidase</fullName>
        <ecNumber evidence="1">3.2.1.85</ecNumber>
    </recommendedName>
    <alternativeName>
        <fullName evidence="1">Beta-D-phosphogalactoside galactohydrolase</fullName>
        <shortName evidence="1">PGALase</shortName>
    </alternativeName>
    <alternativeName>
        <fullName evidence="1">P-beta-Gal</fullName>
        <shortName evidence="1">PBG</shortName>
    </alternativeName>
</protein>
<proteinExistence type="inferred from homology"/>
<feature type="chain" id="PRO_1000069208" description="6-phospho-beta-galactosidase">
    <location>
        <begin position="1"/>
        <end position="468"/>
    </location>
</feature>
<feature type="active site" description="Proton donor" evidence="1">
    <location>
        <position position="160"/>
    </location>
</feature>
<feature type="active site" description="Nucleophile" evidence="1">
    <location>
        <position position="375"/>
    </location>
</feature>
<feature type="binding site" evidence="1">
    <location>
        <position position="19"/>
    </location>
    <ligand>
        <name>D-galactose 6-phosphate</name>
        <dbReference type="ChEBI" id="CHEBI:91004"/>
    </ligand>
</feature>
<feature type="binding site" evidence="1">
    <location>
        <position position="116"/>
    </location>
    <ligand>
        <name>D-galactose 6-phosphate</name>
        <dbReference type="ChEBI" id="CHEBI:91004"/>
    </ligand>
</feature>
<feature type="binding site" evidence="1">
    <location>
        <position position="159"/>
    </location>
    <ligand>
        <name>D-galactose 6-phosphate</name>
        <dbReference type="ChEBI" id="CHEBI:91004"/>
    </ligand>
</feature>
<feature type="binding site" evidence="1">
    <location>
        <position position="160"/>
    </location>
    <ligand>
        <name>D-galactose 6-phosphate</name>
        <dbReference type="ChEBI" id="CHEBI:91004"/>
    </ligand>
</feature>
<feature type="binding site" evidence="1">
    <location>
        <position position="297"/>
    </location>
    <ligand>
        <name>D-galactose 6-phosphate</name>
        <dbReference type="ChEBI" id="CHEBI:91004"/>
    </ligand>
</feature>
<feature type="binding site" evidence="1">
    <location>
        <position position="428"/>
    </location>
    <ligand>
        <name>D-galactose 6-phosphate</name>
        <dbReference type="ChEBI" id="CHEBI:91004"/>
    </ligand>
</feature>
<feature type="binding site" evidence="1">
    <location>
        <position position="429"/>
    </location>
    <ligand>
        <name>D-galactose 6-phosphate</name>
        <dbReference type="ChEBI" id="CHEBI:91004"/>
    </ligand>
</feature>
<feature type="binding site" evidence="1">
    <location>
        <position position="435"/>
    </location>
    <ligand>
        <name>D-galactose 6-phosphate</name>
        <dbReference type="ChEBI" id="CHEBI:91004"/>
    </ligand>
</feature>
<feature type="binding site" evidence="1">
    <location>
        <position position="437"/>
    </location>
    <ligand>
        <name>D-galactose 6-phosphate</name>
        <dbReference type="ChEBI" id="CHEBI:91004"/>
    </ligand>
</feature>
<sequence length="468" mass="53860">MTKTLPKDFIFGGATAAYQAEGATHTDGKGPVAWDKYLEDNYWYTAEPASDFYNRYPVDLKLSEEFGVNGIRISIAWSRIFPTGKGEVNPKGVEYYHNLFAECHKRHVEPFVTLHHFDTPEALHSDGDFLNRENIEHFVNYAEFCFKEFSEVNYWTTFNEIGPIGDGQYLVGKFPPGIQYDLAKVFQSHHNMMVSHARAVKLFKDSGYSGEIGVVHALPTKYPFDANNPDDVRAAELEDIIHNKFILDATYLGKYSDKTMEGVNHILEVNGGELDLREEDFVALDAAKDLNDFLGINYYMSDWMQAFDGETEIIHNGKGEKGSSKYQIKGVGRRKAPVDAPKTDWDWIIFPQGLYDQIMRVKADYPNYKKIYITENGLGYKDEFVDKTVYDDGRIDYVKKHLEVISDAISDGANVKGYFMWSLMDVFSWSNGYEKRYGLFYVDFETQERYPKKSAYWYKKVAETQVIE</sequence>
<organism>
    <name type="scientific">Streptococcus pyogenes serotype M5 (strain Manfredo)</name>
    <dbReference type="NCBI Taxonomy" id="160491"/>
    <lineage>
        <taxon>Bacteria</taxon>
        <taxon>Bacillati</taxon>
        <taxon>Bacillota</taxon>
        <taxon>Bacilli</taxon>
        <taxon>Lactobacillales</taxon>
        <taxon>Streptococcaceae</taxon>
        <taxon>Streptococcus</taxon>
    </lineage>
</organism>
<evidence type="ECO:0000255" key="1">
    <source>
        <dbReference type="HAMAP-Rule" id="MF_01574"/>
    </source>
</evidence>
<dbReference type="EC" id="3.2.1.85" evidence="1"/>
<dbReference type="EMBL" id="AM295007">
    <property type="protein sequence ID" value="CAM30928.1"/>
    <property type="molecule type" value="Genomic_DNA"/>
</dbReference>
<dbReference type="RefSeq" id="WP_011889148.1">
    <property type="nucleotide sequence ID" value="NC_009332.1"/>
</dbReference>
<dbReference type="SMR" id="A2RGE8"/>
<dbReference type="CAZy" id="GH1">
    <property type="family name" value="Glycoside Hydrolase Family 1"/>
</dbReference>
<dbReference type="KEGG" id="spf:SpyM51607"/>
<dbReference type="HOGENOM" id="CLU_001859_1_3_9"/>
<dbReference type="UniPathway" id="UPA00542">
    <property type="reaction ID" value="UER00605"/>
</dbReference>
<dbReference type="GO" id="GO:0005829">
    <property type="term" value="C:cytosol"/>
    <property type="evidence" value="ECO:0007669"/>
    <property type="project" value="TreeGrafter"/>
</dbReference>
<dbReference type="GO" id="GO:0033920">
    <property type="term" value="F:6-phospho-beta-galactosidase activity"/>
    <property type="evidence" value="ECO:0007669"/>
    <property type="project" value="UniProtKB-UniRule"/>
</dbReference>
<dbReference type="GO" id="GO:0008422">
    <property type="term" value="F:beta-glucosidase activity"/>
    <property type="evidence" value="ECO:0007669"/>
    <property type="project" value="TreeGrafter"/>
</dbReference>
<dbReference type="GO" id="GO:0019512">
    <property type="term" value="P:lactose catabolic process via tagatose-6-phosphate"/>
    <property type="evidence" value="ECO:0007669"/>
    <property type="project" value="InterPro"/>
</dbReference>
<dbReference type="FunFam" id="3.20.20.80:FF:000004">
    <property type="entry name" value="Beta-glucosidase 6-phospho-beta-glucosidase"/>
    <property type="match status" value="1"/>
</dbReference>
<dbReference type="Gene3D" id="3.20.20.80">
    <property type="entry name" value="Glycosidases"/>
    <property type="match status" value="1"/>
</dbReference>
<dbReference type="HAMAP" id="MF_01574">
    <property type="entry name" value="LacG"/>
    <property type="match status" value="1"/>
</dbReference>
<dbReference type="InterPro" id="IPR005928">
    <property type="entry name" value="6P-beta-galactosidase"/>
</dbReference>
<dbReference type="InterPro" id="IPR001360">
    <property type="entry name" value="Glyco_hydro_1"/>
</dbReference>
<dbReference type="InterPro" id="IPR018120">
    <property type="entry name" value="Glyco_hydro_1_AS"/>
</dbReference>
<dbReference type="InterPro" id="IPR033132">
    <property type="entry name" value="Glyco_hydro_1_N_CS"/>
</dbReference>
<dbReference type="InterPro" id="IPR017853">
    <property type="entry name" value="Glycoside_hydrolase_SF"/>
</dbReference>
<dbReference type="NCBIfam" id="TIGR01233">
    <property type="entry name" value="lacG"/>
    <property type="match status" value="1"/>
</dbReference>
<dbReference type="NCBIfam" id="NF010036">
    <property type="entry name" value="PRK13511.1"/>
    <property type="match status" value="1"/>
</dbReference>
<dbReference type="PANTHER" id="PTHR10353">
    <property type="entry name" value="GLYCOSYL HYDROLASE"/>
    <property type="match status" value="1"/>
</dbReference>
<dbReference type="PANTHER" id="PTHR10353:SF36">
    <property type="entry name" value="LP05116P"/>
    <property type="match status" value="1"/>
</dbReference>
<dbReference type="Pfam" id="PF00232">
    <property type="entry name" value="Glyco_hydro_1"/>
    <property type="match status" value="1"/>
</dbReference>
<dbReference type="PRINTS" id="PR00131">
    <property type="entry name" value="GLHYDRLASE1"/>
</dbReference>
<dbReference type="SUPFAM" id="SSF51445">
    <property type="entry name" value="(Trans)glycosidases"/>
    <property type="match status" value="1"/>
</dbReference>
<dbReference type="PROSITE" id="PS00572">
    <property type="entry name" value="GLYCOSYL_HYDROL_F1_1"/>
    <property type="match status" value="1"/>
</dbReference>
<dbReference type="PROSITE" id="PS00653">
    <property type="entry name" value="GLYCOSYL_HYDROL_F1_2"/>
    <property type="match status" value="1"/>
</dbReference>